<evidence type="ECO:0000255" key="1">
    <source>
        <dbReference type="HAMAP-Rule" id="MF_00015"/>
    </source>
</evidence>
<organism>
    <name type="scientific">Clostridium kluyveri (strain NBRC 12016)</name>
    <dbReference type="NCBI Taxonomy" id="583346"/>
    <lineage>
        <taxon>Bacteria</taxon>
        <taxon>Bacillati</taxon>
        <taxon>Bacillota</taxon>
        <taxon>Clostridia</taxon>
        <taxon>Eubacteriales</taxon>
        <taxon>Clostridiaceae</taxon>
        <taxon>Clostridium</taxon>
    </lineage>
</organism>
<reference key="1">
    <citation type="submission" date="2005-09" db="EMBL/GenBank/DDBJ databases">
        <title>Complete genome sequence of Clostridium kluyveri and comparative genomics of Clostridia species.</title>
        <authorList>
            <person name="Inui M."/>
            <person name="Nonaka H."/>
            <person name="Shinoda Y."/>
            <person name="Ikenaga Y."/>
            <person name="Abe M."/>
            <person name="Naito K."/>
            <person name="Vertes A.A."/>
            <person name="Yukawa H."/>
        </authorList>
    </citation>
    <scope>NUCLEOTIDE SEQUENCE [LARGE SCALE GENOMIC DNA]</scope>
    <source>
        <strain>NBRC 12016</strain>
    </source>
</reference>
<accession>B9E1Z5</accession>
<comment type="function">
    <text evidence="1">Represses a number of genes involved in the response to DNA damage (SOS response), including recA and lexA. In the presence of single-stranded DNA, RecA interacts with LexA causing an autocatalytic cleavage which disrupts the DNA-binding part of LexA, leading to derepression of the SOS regulon and eventually DNA repair.</text>
</comment>
<comment type="catalytic activity">
    <reaction evidence="1">
        <text>Hydrolysis of Ala-|-Gly bond in repressor LexA.</text>
        <dbReference type="EC" id="3.4.21.88"/>
    </reaction>
</comment>
<comment type="subunit">
    <text evidence="1">Homodimer.</text>
</comment>
<comment type="similarity">
    <text evidence="1">Belongs to the peptidase S24 family.</text>
</comment>
<name>LEXA_CLOK1</name>
<proteinExistence type="inferred from homology"/>
<gene>
    <name evidence="1" type="primary">lexA</name>
    <name type="ordered locus">CKR_1469</name>
</gene>
<protein>
    <recommendedName>
        <fullName evidence="1">LexA repressor</fullName>
        <ecNumber evidence="1">3.4.21.88</ecNumber>
    </recommendedName>
</protein>
<dbReference type="EC" id="3.4.21.88" evidence="1"/>
<dbReference type="EMBL" id="AP009049">
    <property type="protein sequence ID" value="BAH06520.1"/>
    <property type="molecule type" value="Genomic_DNA"/>
</dbReference>
<dbReference type="RefSeq" id="WP_012101974.1">
    <property type="nucleotide sequence ID" value="NC_011837.1"/>
</dbReference>
<dbReference type="SMR" id="B9E1Z5"/>
<dbReference type="MEROPS" id="S24.001"/>
<dbReference type="KEGG" id="ckr:CKR_1469"/>
<dbReference type="HOGENOM" id="CLU_066192_45_1_9"/>
<dbReference type="Proteomes" id="UP000007969">
    <property type="component" value="Chromosome"/>
</dbReference>
<dbReference type="GO" id="GO:0003677">
    <property type="term" value="F:DNA binding"/>
    <property type="evidence" value="ECO:0007669"/>
    <property type="project" value="UniProtKB-UniRule"/>
</dbReference>
<dbReference type="GO" id="GO:0004252">
    <property type="term" value="F:serine-type endopeptidase activity"/>
    <property type="evidence" value="ECO:0007669"/>
    <property type="project" value="UniProtKB-UniRule"/>
</dbReference>
<dbReference type="GO" id="GO:0006281">
    <property type="term" value="P:DNA repair"/>
    <property type="evidence" value="ECO:0007669"/>
    <property type="project" value="UniProtKB-UniRule"/>
</dbReference>
<dbReference type="GO" id="GO:0006260">
    <property type="term" value="P:DNA replication"/>
    <property type="evidence" value="ECO:0007669"/>
    <property type="project" value="UniProtKB-UniRule"/>
</dbReference>
<dbReference type="GO" id="GO:0045892">
    <property type="term" value="P:negative regulation of DNA-templated transcription"/>
    <property type="evidence" value="ECO:0007669"/>
    <property type="project" value="UniProtKB-UniRule"/>
</dbReference>
<dbReference type="GO" id="GO:0006508">
    <property type="term" value="P:proteolysis"/>
    <property type="evidence" value="ECO:0007669"/>
    <property type="project" value="InterPro"/>
</dbReference>
<dbReference type="GO" id="GO:0009432">
    <property type="term" value="P:SOS response"/>
    <property type="evidence" value="ECO:0007669"/>
    <property type="project" value="UniProtKB-UniRule"/>
</dbReference>
<dbReference type="CDD" id="cd06529">
    <property type="entry name" value="S24_LexA-like"/>
    <property type="match status" value="1"/>
</dbReference>
<dbReference type="FunFam" id="1.10.10.10:FF:000009">
    <property type="entry name" value="LexA repressor"/>
    <property type="match status" value="1"/>
</dbReference>
<dbReference type="FunFam" id="2.10.109.10:FF:000001">
    <property type="entry name" value="LexA repressor"/>
    <property type="match status" value="1"/>
</dbReference>
<dbReference type="Gene3D" id="2.10.109.10">
    <property type="entry name" value="Umud Fragment, subunit A"/>
    <property type="match status" value="1"/>
</dbReference>
<dbReference type="Gene3D" id="1.10.10.10">
    <property type="entry name" value="Winged helix-like DNA-binding domain superfamily/Winged helix DNA-binding domain"/>
    <property type="match status" value="1"/>
</dbReference>
<dbReference type="HAMAP" id="MF_00015">
    <property type="entry name" value="LexA"/>
    <property type="match status" value="1"/>
</dbReference>
<dbReference type="InterPro" id="IPR006200">
    <property type="entry name" value="LexA"/>
</dbReference>
<dbReference type="InterPro" id="IPR039418">
    <property type="entry name" value="LexA-like"/>
</dbReference>
<dbReference type="InterPro" id="IPR036286">
    <property type="entry name" value="LexA/Signal_pep-like_sf"/>
</dbReference>
<dbReference type="InterPro" id="IPR006199">
    <property type="entry name" value="LexA_DNA-bd_dom"/>
</dbReference>
<dbReference type="InterPro" id="IPR050077">
    <property type="entry name" value="LexA_repressor"/>
</dbReference>
<dbReference type="InterPro" id="IPR006197">
    <property type="entry name" value="Peptidase_S24_LexA"/>
</dbReference>
<dbReference type="InterPro" id="IPR015927">
    <property type="entry name" value="Peptidase_S24_S26A/B/C"/>
</dbReference>
<dbReference type="InterPro" id="IPR036388">
    <property type="entry name" value="WH-like_DNA-bd_sf"/>
</dbReference>
<dbReference type="InterPro" id="IPR036390">
    <property type="entry name" value="WH_DNA-bd_sf"/>
</dbReference>
<dbReference type="NCBIfam" id="TIGR00498">
    <property type="entry name" value="lexA"/>
    <property type="match status" value="1"/>
</dbReference>
<dbReference type="PANTHER" id="PTHR33516">
    <property type="entry name" value="LEXA REPRESSOR"/>
    <property type="match status" value="1"/>
</dbReference>
<dbReference type="PANTHER" id="PTHR33516:SF2">
    <property type="entry name" value="LEXA REPRESSOR-RELATED"/>
    <property type="match status" value="1"/>
</dbReference>
<dbReference type="Pfam" id="PF01726">
    <property type="entry name" value="LexA_DNA_bind"/>
    <property type="match status" value="1"/>
</dbReference>
<dbReference type="Pfam" id="PF00717">
    <property type="entry name" value="Peptidase_S24"/>
    <property type="match status" value="1"/>
</dbReference>
<dbReference type="PRINTS" id="PR00726">
    <property type="entry name" value="LEXASERPTASE"/>
</dbReference>
<dbReference type="SUPFAM" id="SSF51306">
    <property type="entry name" value="LexA/Signal peptidase"/>
    <property type="match status" value="1"/>
</dbReference>
<dbReference type="SUPFAM" id="SSF46785">
    <property type="entry name" value="Winged helix' DNA-binding domain"/>
    <property type="match status" value="1"/>
</dbReference>
<sequence>MTERSNNRQSQIYNFIKSQIKQKGYPPSVREICTAVGLKSTSTVHSYLEKLERRGFIKRDATKSRTIEVIEKSQKKEMIEVPIIGTITAGMPIIAVENIEDYFPLPMDYIKNKREIFMLRVKGESMVDAGILDGDLSLIEKVHSAENGDIVVALIENEATLKRFFKEENHIRLQPENKNMPPIIVDDCKIIGRLIGIYRQYE</sequence>
<feature type="chain" id="PRO_1000116601" description="LexA repressor">
    <location>
        <begin position="1"/>
        <end position="202"/>
    </location>
</feature>
<feature type="DNA-binding region" description="H-T-H motif" evidence="1">
    <location>
        <begin position="29"/>
        <end position="49"/>
    </location>
</feature>
<feature type="active site" description="For autocatalytic cleavage activity" evidence="1">
    <location>
        <position position="125"/>
    </location>
</feature>
<feature type="active site" description="For autocatalytic cleavage activity" evidence="1">
    <location>
        <position position="162"/>
    </location>
</feature>
<feature type="site" description="Cleavage; by autolysis" evidence="1">
    <location>
        <begin position="89"/>
        <end position="90"/>
    </location>
</feature>
<keyword id="KW-0068">Autocatalytic cleavage</keyword>
<keyword id="KW-0227">DNA damage</keyword>
<keyword id="KW-0234">DNA repair</keyword>
<keyword id="KW-0235">DNA replication</keyword>
<keyword id="KW-0238">DNA-binding</keyword>
<keyword id="KW-0378">Hydrolase</keyword>
<keyword id="KW-0678">Repressor</keyword>
<keyword id="KW-0742">SOS response</keyword>
<keyword id="KW-0804">Transcription</keyword>
<keyword id="KW-0805">Transcription regulation</keyword>